<organism>
    <name type="scientific">Rattus norvegicus</name>
    <name type="common">Rat</name>
    <dbReference type="NCBI Taxonomy" id="10116"/>
    <lineage>
        <taxon>Eukaryota</taxon>
        <taxon>Metazoa</taxon>
        <taxon>Chordata</taxon>
        <taxon>Craniata</taxon>
        <taxon>Vertebrata</taxon>
        <taxon>Euteleostomi</taxon>
        <taxon>Mammalia</taxon>
        <taxon>Eutheria</taxon>
        <taxon>Euarchontoglires</taxon>
        <taxon>Glires</taxon>
        <taxon>Rodentia</taxon>
        <taxon>Myomorpha</taxon>
        <taxon>Muroidea</taxon>
        <taxon>Muridae</taxon>
        <taxon>Murinae</taxon>
        <taxon>Rattus</taxon>
    </lineage>
</organism>
<comment type="function">
    <text evidence="1 2">Essential for the proper assembly of type I and type II keratin protein complexes and formation of keratin intermediate filaments in the inner root sheath (irs) (By similarity). Plays a role in the cytoskeleton organization (By similarity).</text>
</comment>
<comment type="subunit">
    <text evidence="1 2 7">Heterodimer of a type I and a type II keratin. Heterodimer with type II keratin KRT5 leading to the formation of keratin intermediate filament (KIF) network. Interacts with KRT6A to form filaments.</text>
</comment>
<comment type="subcellular location">
    <subcellularLocation>
        <location evidence="2">Cytoplasm</location>
    </subcellularLocation>
</comment>
<comment type="miscellaneous">
    <text evidence="7">There are two types of cytoskeletal and microfibrillar keratin: I (acidic; 40-55 kDa) and II (neutral to basic; 56-70 kDa).</text>
</comment>
<comment type="similarity">
    <text evidence="4">Belongs to the intermediate filament family.</text>
</comment>
<sequence length="446" mass="48943">MSLRLSSGSKRSYARPSTGSLRGASFGAANACGVAGIGSGFSCAFGSSSTGGNTGVANSCAGFTVNEGGLLSGNEKVTMQNLNDRLASYLDNVQALQEANADLEQKIKGWYEKFGPGSCRGLDHDYSRYFPIIDDLKNQIITSTTSNANAVLQIDNARLTADDFRLKYENELALHQSVEADVNGLRRVLDEITLCRTDLEIQYETLSEELTYLKKNHKEEMQALQCAAGGNVNVEMNAAPGVDLTVLLNNMRAEYEALAEQNRRDAEAWFQEKSASLQQQITEDVGATTSARNELTEMKRTLQTLEIELQSLLATKHSLECSLTETEGNYCTQLAQIQAQISALEEQLHQVRTETEGQKLEYEQLLNVKAHLEKEIETYCLLIGGDEGACKSSSYKSKDYTSGNAGNQSKDSPKAIVVKKVLEEVDQRSKILTTRLHSLEEKSQSN</sequence>
<name>K1C25_RAT</name>
<feature type="chain" id="PRO_0000312694" description="Keratin, type I cytoskeletal 25">
    <location>
        <begin position="1"/>
        <end position="446"/>
    </location>
</feature>
<feature type="domain" description="IF rod" evidence="4">
    <location>
        <begin position="75"/>
        <end position="390"/>
    </location>
</feature>
<feature type="region of interest" description="Head" evidence="3">
    <location>
        <begin position="1"/>
        <end position="74"/>
    </location>
</feature>
<feature type="region of interest" description="Disordered" evidence="5">
    <location>
        <begin position="1"/>
        <end position="20"/>
    </location>
</feature>
<feature type="region of interest" description="Coil 1A" evidence="3">
    <location>
        <begin position="75"/>
        <end position="110"/>
    </location>
</feature>
<feature type="region of interest" description="Linker 1" evidence="3">
    <location>
        <begin position="111"/>
        <end position="132"/>
    </location>
</feature>
<feature type="region of interest" description="Coil 1B" evidence="3">
    <location>
        <begin position="133"/>
        <end position="224"/>
    </location>
</feature>
<feature type="region of interest" description="Linker 12" evidence="3">
    <location>
        <begin position="225"/>
        <end position="247"/>
    </location>
</feature>
<feature type="region of interest" description="Coil 2" evidence="3">
    <location>
        <begin position="248"/>
        <end position="386"/>
    </location>
</feature>
<feature type="region of interest" description="Tail" evidence="3">
    <location>
        <begin position="387"/>
        <end position="446"/>
    </location>
</feature>
<feature type="region of interest" description="Disordered" evidence="5">
    <location>
        <begin position="394"/>
        <end position="413"/>
    </location>
</feature>
<feature type="compositionally biased region" description="Polar residues" evidence="5">
    <location>
        <begin position="400"/>
        <end position="410"/>
    </location>
</feature>
<feature type="modified residue" description="Phosphoserine" evidence="1">
    <location>
        <position position="438"/>
    </location>
</feature>
<keyword id="KW-0175">Coiled coil</keyword>
<keyword id="KW-0963">Cytoplasm</keyword>
<keyword id="KW-0403">Intermediate filament</keyword>
<keyword id="KW-0416">Keratin</keyword>
<keyword id="KW-0597">Phosphoprotein</keyword>
<keyword id="KW-1185">Reference proteome</keyword>
<accession>Q6IFX0</accession>
<protein>
    <recommendedName>
        <fullName>Keratin, type I cytoskeletal 25</fullName>
    </recommendedName>
    <alternativeName>
        <fullName>Cytokeratin-25</fullName>
        <shortName>CK-25</shortName>
    </alternativeName>
    <alternativeName>
        <fullName>Keratin-25</fullName>
        <shortName>K25</shortName>
    </alternativeName>
    <alternativeName>
        <fullName>Keratin-25A</fullName>
        <shortName>K25A</shortName>
    </alternativeName>
    <alternativeName>
        <fullName>Type I inner root sheath-specific keratin-K25irs1</fullName>
    </alternativeName>
    <alternativeName>
        <fullName>Type I keratin KA38</fullName>
    </alternativeName>
</protein>
<proteinExistence type="inferred from homology"/>
<dbReference type="EMBL" id="AABR03074128">
    <property type="status" value="NOT_ANNOTATED_CDS"/>
    <property type="molecule type" value="Genomic_DNA"/>
</dbReference>
<dbReference type="EMBL" id="BK004028">
    <property type="protein sequence ID" value="DAA04462.1"/>
    <property type="molecule type" value="mRNA"/>
</dbReference>
<dbReference type="RefSeq" id="NP_001008822.1">
    <property type="nucleotide sequence ID" value="NM_001008822.2"/>
</dbReference>
<dbReference type="RefSeq" id="XP_017452807.1">
    <property type="nucleotide sequence ID" value="XM_017597318.1"/>
</dbReference>
<dbReference type="RefSeq" id="XP_017452808.1">
    <property type="nucleotide sequence ID" value="XM_017597319.1"/>
</dbReference>
<dbReference type="SMR" id="Q6IFX0"/>
<dbReference type="FunCoup" id="Q6IFX0">
    <property type="interactions" value="124"/>
</dbReference>
<dbReference type="STRING" id="10116.ENSRNOP00000015150"/>
<dbReference type="iPTMnet" id="Q6IFX0"/>
<dbReference type="PhosphoSitePlus" id="Q6IFX0"/>
<dbReference type="PaxDb" id="10116-ENSRNOP00000015150"/>
<dbReference type="Ensembl" id="ENSRNOT00000015150.4">
    <property type="protein sequence ID" value="ENSRNOP00000015150.1"/>
    <property type="gene ID" value="ENSRNOG00000011196.4"/>
</dbReference>
<dbReference type="GeneID" id="303519"/>
<dbReference type="KEGG" id="rno:303519"/>
<dbReference type="UCSC" id="RGD:1359097">
    <property type="organism name" value="rat"/>
</dbReference>
<dbReference type="AGR" id="RGD:1359097"/>
<dbReference type="CTD" id="147183"/>
<dbReference type="RGD" id="1359097">
    <property type="gene designation" value="Krt25"/>
</dbReference>
<dbReference type="eggNOG" id="ENOG502SKJN">
    <property type="taxonomic scope" value="Eukaryota"/>
</dbReference>
<dbReference type="GeneTree" id="ENSGT00940000161994"/>
<dbReference type="HOGENOM" id="CLU_012560_8_3_1"/>
<dbReference type="InParanoid" id="Q6IFX0"/>
<dbReference type="OrthoDB" id="66144at9989"/>
<dbReference type="PhylomeDB" id="Q6IFX0"/>
<dbReference type="TreeFam" id="TF332742"/>
<dbReference type="Reactome" id="R-RNO-6805567">
    <property type="pathway name" value="Keratinization"/>
</dbReference>
<dbReference type="Reactome" id="R-RNO-6809371">
    <property type="pathway name" value="Formation of the cornified envelope"/>
</dbReference>
<dbReference type="PRO" id="PR:Q6IFX0"/>
<dbReference type="Proteomes" id="UP000002494">
    <property type="component" value="Chromosome 10"/>
</dbReference>
<dbReference type="Bgee" id="ENSRNOG00000011196">
    <property type="expression patterns" value="Expressed in testis and 2 other cell types or tissues"/>
</dbReference>
<dbReference type="GO" id="GO:0005737">
    <property type="term" value="C:cytoplasm"/>
    <property type="evidence" value="ECO:0007669"/>
    <property type="project" value="UniProtKB-SubCell"/>
</dbReference>
<dbReference type="GO" id="GO:0005856">
    <property type="term" value="C:cytoskeleton"/>
    <property type="evidence" value="ECO:0000318"/>
    <property type="project" value="GO_Central"/>
</dbReference>
<dbReference type="GO" id="GO:0045095">
    <property type="term" value="C:keratin filament"/>
    <property type="evidence" value="ECO:0000266"/>
    <property type="project" value="RGD"/>
</dbReference>
<dbReference type="GO" id="GO:0046982">
    <property type="term" value="F:protein heterodimerization activity"/>
    <property type="evidence" value="ECO:0000250"/>
    <property type="project" value="UniProtKB"/>
</dbReference>
<dbReference type="GO" id="GO:0005198">
    <property type="term" value="F:structural molecule activity"/>
    <property type="evidence" value="ECO:0007669"/>
    <property type="project" value="InterPro"/>
</dbReference>
<dbReference type="GO" id="GO:0007010">
    <property type="term" value="P:cytoskeleton organization"/>
    <property type="evidence" value="ECO:0000250"/>
    <property type="project" value="UniProtKB"/>
</dbReference>
<dbReference type="GO" id="GO:0030855">
    <property type="term" value="P:epithelial cell differentiation"/>
    <property type="evidence" value="ECO:0000318"/>
    <property type="project" value="GO_Central"/>
</dbReference>
<dbReference type="GO" id="GO:0042633">
    <property type="term" value="P:hair cycle"/>
    <property type="evidence" value="ECO:0000266"/>
    <property type="project" value="RGD"/>
</dbReference>
<dbReference type="GO" id="GO:0031069">
    <property type="term" value="P:hair follicle morphogenesis"/>
    <property type="evidence" value="ECO:0000266"/>
    <property type="project" value="RGD"/>
</dbReference>
<dbReference type="GO" id="GO:0045109">
    <property type="term" value="P:intermediate filament organization"/>
    <property type="evidence" value="ECO:0000266"/>
    <property type="project" value="RGD"/>
</dbReference>
<dbReference type="FunFam" id="1.20.5.1160:FF:000002">
    <property type="entry name" value="Type I keratin 10"/>
    <property type="match status" value="1"/>
</dbReference>
<dbReference type="FunFam" id="1.20.5.170:FF:000002">
    <property type="entry name" value="Type I keratin KA11"/>
    <property type="match status" value="1"/>
</dbReference>
<dbReference type="FunFam" id="1.20.5.500:FF:000001">
    <property type="entry name" value="Type II keratin 23"/>
    <property type="match status" value="1"/>
</dbReference>
<dbReference type="Gene3D" id="1.20.5.170">
    <property type="match status" value="1"/>
</dbReference>
<dbReference type="Gene3D" id="1.20.5.500">
    <property type="entry name" value="Single helix bin"/>
    <property type="match status" value="1"/>
</dbReference>
<dbReference type="Gene3D" id="1.20.5.1160">
    <property type="entry name" value="Vasodilator-stimulated phosphoprotein"/>
    <property type="match status" value="1"/>
</dbReference>
<dbReference type="InterPro" id="IPR039008">
    <property type="entry name" value="IF_rod_dom"/>
</dbReference>
<dbReference type="InterPro" id="IPR002957">
    <property type="entry name" value="Keratin_I"/>
</dbReference>
<dbReference type="PANTHER" id="PTHR23239">
    <property type="entry name" value="INTERMEDIATE FILAMENT"/>
    <property type="match status" value="1"/>
</dbReference>
<dbReference type="PANTHER" id="PTHR23239:SF160">
    <property type="entry name" value="KERATIN, TYPE I CYTOSKELETAL 25"/>
    <property type="match status" value="1"/>
</dbReference>
<dbReference type="Pfam" id="PF00038">
    <property type="entry name" value="Filament"/>
    <property type="match status" value="1"/>
</dbReference>
<dbReference type="PRINTS" id="PR01248">
    <property type="entry name" value="TYPE1KERATIN"/>
</dbReference>
<dbReference type="SMART" id="SM01391">
    <property type="entry name" value="Filament"/>
    <property type="match status" value="1"/>
</dbReference>
<dbReference type="SUPFAM" id="SSF64593">
    <property type="entry name" value="Intermediate filament protein, coiled coil region"/>
    <property type="match status" value="2"/>
</dbReference>
<dbReference type="PROSITE" id="PS51842">
    <property type="entry name" value="IF_ROD_2"/>
    <property type="match status" value="1"/>
</dbReference>
<reference evidence="7" key="1">
    <citation type="journal article" date="2004" name="Nature">
        <title>Genome sequence of the Brown Norway rat yields insights into mammalian evolution.</title>
        <authorList>
            <person name="Gibbs R.A."/>
            <person name="Weinstock G.M."/>
            <person name="Metzker M.L."/>
            <person name="Muzny D.M."/>
            <person name="Sodergren E.J."/>
            <person name="Scherer S."/>
            <person name="Scott G."/>
            <person name="Steffen D."/>
            <person name="Worley K.C."/>
            <person name="Burch P.E."/>
            <person name="Okwuonu G."/>
            <person name="Hines S."/>
            <person name="Lewis L."/>
            <person name="Deramo C."/>
            <person name="Delgado O."/>
            <person name="Dugan-Rocha S."/>
            <person name="Miner G."/>
            <person name="Morgan M."/>
            <person name="Hawes A."/>
            <person name="Gill R."/>
            <person name="Holt R.A."/>
            <person name="Adams M.D."/>
            <person name="Amanatides P.G."/>
            <person name="Baden-Tillson H."/>
            <person name="Barnstead M."/>
            <person name="Chin S."/>
            <person name="Evans C.A."/>
            <person name="Ferriera S."/>
            <person name="Fosler C."/>
            <person name="Glodek A."/>
            <person name="Gu Z."/>
            <person name="Jennings D."/>
            <person name="Kraft C.L."/>
            <person name="Nguyen T."/>
            <person name="Pfannkoch C.M."/>
            <person name="Sitter C."/>
            <person name="Sutton G.G."/>
            <person name="Venter J.C."/>
            <person name="Woodage T."/>
            <person name="Smith D."/>
            <person name="Lee H.-M."/>
            <person name="Gustafson E."/>
            <person name="Cahill P."/>
            <person name="Kana A."/>
            <person name="Doucette-Stamm L."/>
            <person name="Weinstock K."/>
            <person name="Fechtel K."/>
            <person name="Weiss R.B."/>
            <person name="Dunn D.M."/>
            <person name="Green E.D."/>
            <person name="Blakesley R.W."/>
            <person name="Bouffard G.G."/>
            <person name="De Jong P.J."/>
            <person name="Osoegawa K."/>
            <person name="Zhu B."/>
            <person name="Marra M."/>
            <person name="Schein J."/>
            <person name="Bosdet I."/>
            <person name="Fjell C."/>
            <person name="Jones S."/>
            <person name="Krzywinski M."/>
            <person name="Mathewson C."/>
            <person name="Siddiqui A."/>
            <person name="Wye N."/>
            <person name="McPherson J."/>
            <person name="Zhao S."/>
            <person name="Fraser C.M."/>
            <person name="Shetty J."/>
            <person name="Shatsman S."/>
            <person name="Geer K."/>
            <person name="Chen Y."/>
            <person name="Abramzon S."/>
            <person name="Nierman W.C."/>
            <person name="Havlak P.H."/>
            <person name="Chen R."/>
            <person name="Durbin K.J."/>
            <person name="Egan A."/>
            <person name="Ren Y."/>
            <person name="Song X.-Z."/>
            <person name="Li B."/>
            <person name="Liu Y."/>
            <person name="Qin X."/>
            <person name="Cawley S."/>
            <person name="Cooney A.J."/>
            <person name="D'Souza L.M."/>
            <person name="Martin K."/>
            <person name="Wu J.Q."/>
            <person name="Gonzalez-Garay M.L."/>
            <person name="Jackson A.R."/>
            <person name="Kalafus K.J."/>
            <person name="McLeod M.P."/>
            <person name="Milosavljevic A."/>
            <person name="Virk D."/>
            <person name="Volkov A."/>
            <person name="Wheeler D.A."/>
            <person name="Zhang Z."/>
            <person name="Bailey J.A."/>
            <person name="Eichler E.E."/>
            <person name="Tuzun E."/>
            <person name="Birney E."/>
            <person name="Mongin E."/>
            <person name="Ureta-Vidal A."/>
            <person name="Woodwark C."/>
            <person name="Zdobnov E."/>
            <person name="Bork P."/>
            <person name="Suyama M."/>
            <person name="Torrents D."/>
            <person name="Alexandersson M."/>
            <person name="Trask B.J."/>
            <person name="Young J.M."/>
            <person name="Huang H."/>
            <person name="Wang H."/>
            <person name="Xing H."/>
            <person name="Daniels S."/>
            <person name="Gietzen D."/>
            <person name="Schmidt J."/>
            <person name="Stevens K."/>
            <person name="Vitt U."/>
            <person name="Wingrove J."/>
            <person name="Camara F."/>
            <person name="Mar Alba M."/>
            <person name="Abril J.F."/>
            <person name="Guigo R."/>
            <person name="Smit A."/>
            <person name="Dubchak I."/>
            <person name="Rubin E.M."/>
            <person name="Couronne O."/>
            <person name="Poliakov A."/>
            <person name="Huebner N."/>
            <person name="Ganten D."/>
            <person name="Goesele C."/>
            <person name="Hummel O."/>
            <person name="Kreitler T."/>
            <person name="Lee Y.-A."/>
            <person name="Monti J."/>
            <person name="Schulz H."/>
            <person name="Zimdahl H."/>
            <person name="Himmelbauer H."/>
            <person name="Lehrach H."/>
            <person name="Jacob H.J."/>
            <person name="Bromberg S."/>
            <person name="Gullings-Handley J."/>
            <person name="Jensen-Seaman M.I."/>
            <person name="Kwitek A.E."/>
            <person name="Lazar J."/>
            <person name="Pasko D."/>
            <person name="Tonellato P.J."/>
            <person name="Twigger S."/>
            <person name="Ponting C.P."/>
            <person name="Duarte J.M."/>
            <person name="Rice S."/>
            <person name="Goodstadt L."/>
            <person name="Beatson S.A."/>
            <person name="Emes R.D."/>
            <person name="Winter E.E."/>
            <person name="Webber C."/>
            <person name="Brandt P."/>
            <person name="Nyakatura G."/>
            <person name="Adetobi M."/>
            <person name="Chiaromonte F."/>
            <person name="Elnitski L."/>
            <person name="Eswara P."/>
            <person name="Hardison R.C."/>
            <person name="Hou M."/>
            <person name="Kolbe D."/>
            <person name="Makova K."/>
            <person name="Miller W."/>
            <person name="Nekrutenko A."/>
            <person name="Riemer C."/>
            <person name="Schwartz S."/>
            <person name="Taylor J."/>
            <person name="Yang S."/>
            <person name="Zhang Y."/>
            <person name="Lindpaintner K."/>
            <person name="Andrews T.D."/>
            <person name="Caccamo M."/>
            <person name="Clamp M."/>
            <person name="Clarke L."/>
            <person name="Curwen V."/>
            <person name="Durbin R.M."/>
            <person name="Eyras E."/>
            <person name="Searle S.M."/>
            <person name="Cooper G.M."/>
            <person name="Batzoglou S."/>
            <person name="Brudno M."/>
            <person name="Sidow A."/>
            <person name="Stone E.A."/>
            <person name="Payseur B.A."/>
            <person name="Bourque G."/>
            <person name="Lopez-Otin C."/>
            <person name="Puente X.S."/>
            <person name="Chakrabarti K."/>
            <person name="Chatterji S."/>
            <person name="Dewey C."/>
            <person name="Pachter L."/>
            <person name="Bray N."/>
            <person name="Yap V.B."/>
            <person name="Caspi A."/>
            <person name="Tesler G."/>
            <person name="Pevzner P.A."/>
            <person name="Haussler D."/>
            <person name="Roskin K.M."/>
            <person name="Baertsch R."/>
            <person name="Clawson H."/>
            <person name="Furey T.S."/>
            <person name="Hinrichs A.S."/>
            <person name="Karolchik D."/>
            <person name="Kent W.J."/>
            <person name="Rosenbloom K.R."/>
            <person name="Trumbower H."/>
            <person name="Weirauch M."/>
            <person name="Cooper D.N."/>
            <person name="Stenson P.D."/>
            <person name="Ma B."/>
            <person name="Brent M."/>
            <person name="Arumugam M."/>
            <person name="Shteynberg D."/>
            <person name="Copley R.R."/>
            <person name="Taylor M.S."/>
            <person name="Riethman H."/>
            <person name="Mudunuri U."/>
            <person name="Peterson J."/>
            <person name="Guyer M."/>
            <person name="Felsenfeld A."/>
            <person name="Old S."/>
            <person name="Mockrin S."/>
            <person name="Collins F.S."/>
        </authorList>
    </citation>
    <scope>NUCLEOTIDE SEQUENCE [LARGE SCALE GENOMIC DNA]</scope>
    <source>
        <strain evidence="6">Brown Norway</strain>
    </source>
</reference>
<reference evidence="7 8" key="2">
    <citation type="journal article" date="2004" name="Eur. J. Cell Biol.">
        <title>Comprehensive analysis of keratin gene clusters in humans and rodents.</title>
        <authorList>
            <person name="Hesse M."/>
            <person name="Zimek A."/>
            <person name="Weber K."/>
            <person name="Magin T.M."/>
        </authorList>
    </citation>
    <scope>IDENTIFICATION</scope>
</reference>
<gene>
    <name evidence="1" type="primary">Krt25</name>
    <name evidence="8" type="synonym">Ka38</name>
    <name evidence="9" type="synonym">Krt25a</name>
</gene>
<evidence type="ECO:0000250" key="1">
    <source>
        <dbReference type="UniProtKB" id="Q7Z3Z0"/>
    </source>
</evidence>
<evidence type="ECO:0000250" key="2">
    <source>
        <dbReference type="UniProtKB" id="Q8VCW2"/>
    </source>
</evidence>
<evidence type="ECO:0000255" key="3"/>
<evidence type="ECO:0000255" key="4">
    <source>
        <dbReference type="PROSITE-ProRule" id="PRU01188"/>
    </source>
</evidence>
<evidence type="ECO:0000256" key="5">
    <source>
        <dbReference type="SAM" id="MobiDB-lite"/>
    </source>
</evidence>
<evidence type="ECO:0000269" key="6">
    <source>
    </source>
</evidence>
<evidence type="ECO:0000305" key="7"/>
<evidence type="ECO:0000312" key="8">
    <source>
        <dbReference type="EMBL" id="DAA04462.1"/>
    </source>
</evidence>
<evidence type="ECO:0000312" key="9">
    <source>
        <dbReference type="RGD" id="1359097"/>
    </source>
</evidence>